<organism>
    <name type="scientific">Deinococcus geothermalis (strain DSM 11300 / CIP 105573 / AG-3a)</name>
    <dbReference type="NCBI Taxonomy" id="319795"/>
    <lineage>
        <taxon>Bacteria</taxon>
        <taxon>Thermotogati</taxon>
        <taxon>Deinococcota</taxon>
        <taxon>Deinococci</taxon>
        <taxon>Deinococcales</taxon>
        <taxon>Deinococcaceae</taxon>
        <taxon>Deinococcus</taxon>
    </lineage>
</organism>
<evidence type="ECO:0000255" key="1">
    <source>
        <dbReference type="HAMAP-Rule" id="MF_00023"/>
    </source>
</evidence>
<gene>
    <name evidence="1" type="primary">smpB</name>
    <name type="ordered locus">Dgeo_0819</name>
</gene>
<feature type="chain" id="PRO_1000002043" description="SsrA-binding protein">
    <location>
        <begin position="1"/>
        <end position="143"/>
    </location>
</feature>
<dbReference type="EMBL" id="CP000359">
    <property type="protein sequence ID" value="ABF45121.1"/>
    <property type="molecule type" value="Genomic_DNA"/>
</dbReference>
<dbReference type="RefSeq" id="WP_011529961.1">
    <property type="nucleotide sequence ID" value="NC_008025.1"/>
</dbReference>
<dbReference type="SMR" id="Q1J063"/>
<dbReference type="STRING" id="319795.Dgeo_0819"/>
<dbReference type="KEGG" id="dge:Dgeo_0819"/>
<dbReference type="eggNOG" id="COG0691">
    <property type="taxonomic scope" value="Bacteria"/>
</dbReference>
<dbReference type="HOGENOM" id="CLU_108953_0_1_0"/>
<dbReference type="Proteomes" id="UP000002431">
    <property type="component" value="Chromosome"/>
</dbReference>
<dbReference type="GO" id="GO:0005829">
    <property type="term" value="C:cytosol"/>
    <property type="evidence" value="ECO:0007669"/>
    <property type="project" value="TreeGrafter"/>
</dbReference>
<dbReference type="GO" id="GO:0003723">
    <property type="term" value="F:RNA binding"/>
    <property type="evidence" value="ECO:0007669"/>
    <property type="project" value="UniProtKB-UniRule"/>
</dbReference>
<dbReference type="GO" id="GO:0070929">
    <property type="term" value="P:trans-translation"/>
    <property type="evidence" value="ECO:0007669"/>
    <property type="project" value="UniProtKB-UniRule"/>
</dbReference>
<dbReference type="CDD" id="cd09294">
    <property type="entry name" value="SmpB"/>
    <property type="match status" value="1"/>
</dbReference>
<dbReference type="Gene3D" id="2.40.280.10">
    <property type="match status" value="1"/>
</dbReference>
<dbReference type="HAMAP" id="MF_00023">
    <property type="entry name" value="SmpB"/>
    <property type="match status" value="1"/>
</dbReference>
<dbReference type="InterPro" id="IPR023620">
    <property type="entry name" value="SmpB"/>
</dbReference>
<dbReference type="InterPro" id="IPR000037">
    <property type="entry name" value="SsrA-bd_prot"/>
</dbReference>
<dbReference type="InterPro" id="IPR020081">
    <property type="entry name" value="SsrA-bd_prot_CS"/>
</dbReference>
<dbReference type="NCBIfam" id="NF003843">
    <property type="entry name" value="PRK05422.1"/>
    <property type="match status" value="1"/>
</dbReference>
<dbReference type="NCBIfam" id="TIGR00086">
    <property type="entry name" value="smpB"/>
    <property type="match status" value="1"/>
</dbReference>
<dbReference type="PANTHER" id="PTHR30308:SF2">
    <property type="entry name" value="SSRA-BINDING PROTEIN"/>
    <property type="match status" value="1"/>
</dbReference>
<dbReference type="PANTHER" id="PTHR30308">
    <property type="entry name" value="TMRNA-BINDING COMPONENT OF TRANS-TRANSLATION TAGGING COMPLEX"/>
    <property type="match status" value="1"/>
</dbReference>
<dbReference type="Pfam" id="PF01668">
    <property type="entry name" value="SmpB"/>
    <property type="match status" value="1"/>
</dbReference>
<dbReference type="SUPFAM" id="SSF74982">
    <property type="entry name" value="Small protein B (SmpB)"/>
    <property type="match status" value="1"/>
</dbReference>
<dbReference type="PROSITE" id="PS01317">
    <property type="entry name" value="SSRP"/>
    <property type="match status" value="1"/>
</dbReference>
<name>SSRP_DEIGD</name>
<reference key="1">
    <citation type="submission" date="2006-04" db="EMBL/GenBank/DDBJ databases">
        <title>Complete sequence of chromosome of Deinococcus geothermalis DSM 11300.</title>
        <authorList>
            <person name="Copeland A."/>
            <person name="Lucas S."/>
            <person name="Lapidus A."/>
            <person name="Barry K."/>
            <person name="Detter J.C."/>
            <person name="Glavina del Rio T."/>
            <person name="Hammon N."/>
            <person name="Israni S."/>
            <person name="Dalin E."/>
            <person name="Tice H."/>
            <person name="Pitluck S."/>
            <person name="Brettin T."/>
            <person name="Bruce D."/>
            <person name="Han C."/>
            <person name="Tapia R."/>
            <person name="Saunders E."/>
            <person name="Gilna P."/>
            <person name="Schmutz J."/>
            <person name="Larimer F."/>
            <person name="Land M."/>
            <person name="Hauser L."/>
            <person name="Kyrpides N."/>
            <person name="Kim E."/>
            <person name="Daly M.J."/>
            <person name="Fredrickson J.K."/>
            <person name="Makarova K.S."/>
            <person name="Gaidamakova E.K."/>
            <person name="Zhai M."/>
            <person name="Richardson P."/>
        </authorList>
    </citation>
    <scope>NUCLEOTIDE SEQUENCE [LARGE SCALE GENOMIC DNA]</scope>
    <source>
        <strain>DSM 11300 / CIP 105573 / AG-3a</strain>
    </source>
</reference>
<sequence>MRRVYTNRRAHHEYELLERFEAGIALTGSEVKSVRAGGVDFRDAFARLNNGNVELEGLYIPTYTEATYNNHEPRRTRRLLLHREEIGKLKRALEQKGLTLVPTRLYQKGRVFKVELALARGKKLHDKRRAEAEKTLRRELREL</sequence>
<proteinExistence type="inferred from homology"/>
<comment type="function">
    <text evidence="1">Required for rescue of stalled ribosomes mediated by trans-translation. Binds to transfer-messenger RNA (tmRNA), required for stable association of tmRNA with ribosomes. tmRNA and SmpB together mimic tRNA shape, replacing the anticodon stem-loop with SmpB. tmRNA is encoded by the ssrA gene; the 2 termini fold to resemble tRNA(Ala) and it encodes a 'tag peptide', a short internal open reading frame. During trans-translation Ala-aminoacylated tmRNA acts like a tRNA, entering the A-site of stalled ribosomes, displacing the stalled mRNA. The ribosome then switches to translate the ORF on the tmRNA; the nascent peptide is terminated with the 'tag peptide' encoded by the tmRNA and targeted for degradation. The ribosome is freed to recommence translation, which seems to be the essential function of trans-translation.</text>
</comment>
<comment type="subcellular location">
    <subcellularLocation>
        <location evidence="1">Cytoplasm</location>
    </subcellularLocation>
    <text evidence="1">The tmRNA-SmpB complex associates with stalled 70S ribosomes.</text>
</comment>
<comment type="similarity">
    <text evidence="1">Belongs to the SmpB family.</text>
</comment>
<protein>
    <recommendedName>
        <fullName evidence="1">SsrA-binding protein</fullName>
    </recommendedName>
    <alternativeName>
        <fullName evidence="1">Small protein B</fullName>
    </alternativeName>
</protein>
<accession>Q1J063</accession>
<keyword id="KW-0963">Cytoplasm</keyword>
<keyword id="KW-0694">RNA-binding</keyword>